<accession>A1V777</accession>
<sequence>MALTLTDVTRIAHLARLEMADADAERTLTQLNEFFGLVEQMQAVDTTGIAPLAHPIEQILEVAQRLREDAVTEHVNRDDNQRPAPAVQDGLYLVPKVIE</sequence>
<dbReference type="EC" id="6.3.5.-" evidence="1"/>
<dbReference type="EMBL" id="CP000526">
    <property type="protein sequence ID" value="ABM51500.1"/>
    <property type="molecule type" value="Genomic_DNA"/>
</dbReference>
<dbReference type="RefSeq" id="WP_004189769.1">
    <property type="nucleotide sequence ID" value="NC_008785.1"/>
</dbReference>
<dbReference type="SMR" id="A1V777"/>
<dbReference type="GeneID" id="93058695"/>
<dbReference type="KEGG" id="bmv:BMASAVP1_A2784"/>
<dbReference type="HOGENOM" id="CLU_105899_2_2_4"/>
<dbReference type="GO" id="GO:0050566">
    <property type="term" value="F:asparaginyl-tRNA synthase (glutamine-hydrolyzing) activity"/>
    <property type="evidence" value="ECO:0007669"/>
    <property type="project" value="RHEA"/>
</dbReference>
<dbReference type="GO" id="GO:0005524">
    <property type="term" value="F:ATP binding"/>
    <property type="evidence" value="ECO:0007669"/>
    <property type="project" value="UniProtKB-KW"/>
</dbReference>
<dbReference type="GO" id="GO:0050567">
    <property type="term" value="F:glutaminyl-tRNA synthase (glutamine-hydrolyzing) activity"/>
    <property type="evidence" value="ECO:0007669"/>
    <property type="project" value="UniProtKB-UniRule"/>
</dbReference>
<dbReference type="GO" id="GO:0070681">
    <property type="term" value="P:glutaminyl-tRNAGln biosynthesis via transamidation"/>
    <property type="evidence" value="ECO:0007669"/>
    <property type="project" value="TreeGrafter"/>
</dbReference>
<dbReference type="GO" id="GO:0006450">
    <property type="term" value="P:regulation of translational fidelity"/>
    <property type="evidence" value="ECO:0007669"/>
    <property type="project" value="InterPro"/>
</dbReference>
<dbReference type="GO" id="GO:0006412">
    <property type="term" value="P:translation"/>
    <property type="evidence" value="ECO:0007669"/>
    <property type="project" value="UniProtKB-UniRule"/>
</dbReference>
<dbReference type="Gene3D" id="1.10.20.60">
    <property type="entry name" value="Glu-tRNAGln amidotransferase C subunit, N-terminal domain"/>
    <property type="match status" value="1"/>
</dbReference>
<dbReference type="HAMAP" id="MF_00122">
    <property type="entry name" value="GatC"/>
    <property type="match status" value="1"/>
</dbReference>
<dbReference type="InterPro" id="IPR036113">
    <property type="entry name" value="Asp/Glu-ADT_sf_sub_c"/>
</dbReference>
<dbReference type="InterPro" id="IPR003837">
    <property type="entry name" value="GatC"/>
</dbReference>
<dbReference type="NCBIfam" id="TIGR00135">
    <property type="entry name" value="gatC"/>
    <property type="match status" value="1"/>
</dbReference>
<dbReference type="PANTHER" id="PTHR15004">
    <property type="entry name" value="GLUTAMYL-TRNA(GLN) AMIDOTRANSFERASE SUBUNIT C, MITOCHONDRIAL"/>
    <property type="match status" value="1"/>
</dbReference>
<dbReference type="PANTHER" id="PTHR15004:SF0">
    <property type="entry name" value="GLUTAMYL-TRNA(GLN) AMIDOTRANSFERASE SUBUNIT C, MITOCHONDRIAL"/>
    <property type="match status" value="1"/>
</dbReference>
<dbReference type="Pfam" id="PF02686">
    <property type="entry name" value="GatC"/>
    <property type="match status" value="1"/>
</dbReference>
<dbReference type="SUPFAM" id="SSF141000">
    <property type="entry name" value="Glu-tRNAGln amidotransferase C subunit"/>
    <property type="match status" value="1"/>
</dbReference>
<keyword id="KW-0067">ATP-binding</keyword>
<keyword id="KW-0436">Ligase</keyword>
<keyword id="KW-0547">Nucleotide-binding</keyword>
<keyword id="KW-0648">Protein biosynthesis</keyword>
<comment type="function">
    <text evidence="1">Allows the formation of correctly charged Asn-tRNA(Asn) or Gln-tRNA(Gln) through the transamidation of misacylated Asp-tRNA(Asn) or Glu-tRNA(Gln) in organisms which lack either or both of asparaginyl-tRNA or glutaminyl-tRNA synthetases. The reaction takes place in the presence of glutamine and ATP through an activated phospho-Asp-tRNA(Asn) or phospho-Glu-tRNA(Gln).</text>
</comment>
<comment type="catalytic activity">
    <reaction evidence="1">
        <text>L-glutamyl-tRNA(Gln) + L-glutamine + ATP + H2O = L-glutaminyl-tRNA(Gln) + L-glutamate + ADP + phosphate + H(+)</text>
        <dbReference type="Rhea" id="RHEA:17521"/>
        <dbReference type="Rhea" id="RHEA-COMP:9681"/>
        <dbReference type="Rhea" id="RHEA-COMP:9684"/>
        <dbReference type="ChEBI" id="CHEBI:15377"/>
        <dbReference type="ChEBI" id="CHEBI:15378"/>
        <dbReference type="ChEBI" id="CHEBI:29985"/>
        <dbReference type="ChEBI" id="CHEBI:30616"/>
        <dbReference type="ChEBI" id="CHEBI:43474"/>
        <dbReference type="ChEBI" id="CHEBI:58359"/>
        <dbReference type="ChEBI" id="CHEBI:78520"/>
        <dbReference type="ChEBI" id="CHEBI:78521"/>
        <dbReference type="ChEBI" id="CHEBI:456216"/>
    </reaction>
</comment>
<comment type="catalytic activity">
    <reaction evidence="1">
        <text>L-aspartyl-tRNA(Asn) + L-glutamine + ATP + H2O = L-asparaginyl-tRNA(Asn) + L-glutamate + ADP + phosphate + 2 H(+)</text>
        <dbReference type="Rhea" id="RHEA:14513"/>
        <dbReference type="Rhea" id="RHEA-COMP:9674"/>
        <dbReference type="Rhea" id="RHEA-COMP:9677"/>
        <dbReference type="ChEBI" id="CHEBI:15377"/>
        <dbReference type="ChEBI" id="CHEBI:15378"/>
        <dbReference type="ChEBI" id="CHEBI:29985"/>
        <dbReference type="ChEBI" id="CHEBI:30616"/>
        <dbReference type="ChEBI" id="CHEBI:43474"/>
        <dbReference type="ChEBI" id="CHEBI:58359"/>
        <dbReference type="ChEBI" id="CHEBI:78515"/>
        <dbReference type="ChEBI" id="CHEBI:78516"/>
        <dbReference type="ChEBI" id="CHEBI:456216"/>
    </reaction>
</comment>
<comment type="subunit">
    <text evidence="1">Heterotrimer of A, B and C subunits.</text>
</comment>
<comment type="similarity">
    <text evidence="1">Belongs to the GatC family.</text>
</comment>
<organism>
    <name type="scientific">Burkholderia mallei (strain SAVP1)</name>
    <dbReference type="NCBI Taxonomy" id="320388"/>
    <lineage>
        <taxon>Bacteria</taxon>
        <taxon>Pseudomonadati</taxon>
        <taxon>Pseudomonadota</taxon>
        <taxon>Betaproteobacteria</taxon>
        <taxon>Burkholderiales</taxon>
        <taxon>Burkholderiaceae</taxon>
        <taxon>Burkholderia</taxon>
        <taxon>pseudomallei group</taxon>
    </lineage>
</organism>
<protein>
    <recommendedName>
        <fullName evidence="1">Aspartyl/glutamyl-tRNA(Asn/Gln) amidotransferase subunit C</fullName>
        <shortName evidence="1">Asp/Glu-ADT subunit C</shortName>
        <ecNumber evidence="1">6.3.5.-</ecNumber>
    </recommendedName>
</protein>
<reference key="1">
    <citation type="journal article" date="2010" name="Genome Biol. Evol.">
        <title>Continuing evolution of Burkholderia mallei through genome reduction and large-scale rearrangements.</title>
        <authorList>
            <person name="Losada L."/>
            <person name="Ronning C.M."/>
            <person name="DeShazer D."/>
            <person name="Woods D."/>
            <person name="Fedorova N."/>
            <person name="Kim H.S."/>
            <person name="Shabalina S.A."/>
            <person name="Pearson T.R."/>
            <person name="Brinkac L."/>
            <person name="Tan P."/>
            <person name="Nandi T."/>
            <person name="Crabtree J."/>
            <person name="Badger J."/>
            <person name="Beckstrom-Sternberg S."/>
            <person name="Saqib M."/>
            <person name="Schutzer S.E."/>
            <person name="Keim P."/>
            <person name="Nierman W.C."/>
        </authorList>
    </citation>
    <scope>NUCLEOTIDE SEQUENCE [LARGE SCALE GENOMIC DNA]</scope>
    <source>
        <strain>SAVP1</strain>
    </source>
</reference>
<gene>
    <name evidence="1" type="primary">gatC</name>
    <name type="ordered locus">BMASAVP1_A2784</name>
</gene>
<name>GATC_BURMS</name>
<evidence type="ECO:0000255" key="1">
    <source>
        <dbReference type="HAMAP-Rule" id="MF_00122"/>
    </source>
</evidence>
<feature type="chain" id="PRO_1000016089" description="Aspartyl/glutamyl-tRNA(Asn/Gln) amidotransferase subunit C">
    <location>
        <begin position="1"/>
        <end position="99"/>
    </location>
</feature>
<proteinExistence type="inferred from homology"/>